<gene>
    <name evidence="1" type="primary">pdxJ</name>
    <name type="ordered locus">NMC1703</name>
</gene>
<feature type="chain" id="PRO_1000022380" description="Pyridoxine 5'-phosphate synthase">
    <location>
        <begin position="1"/>
        <end position="242"/>
    </location>
</feature>
<feature type="active site" description="Proton acceptor" evidence="1">
    <location>
        <position position="42"/>
    </location>
</feature>
<feature type="active site" description="Proton acceptor" evidence="1">
    <location>
        <position position="69"/>
    </location>
</feature>
<feature type="active site" description="Proton donor" evidence="1">
    <location>
        <position position="190"/>
    </location>
</feature>
<feature type="binding site" evidence="1">
    <location>
        <position position="6"/>
    </location>
    <ligand>
        <name>3-amino-2-oxopropyl phosphate</name>
        <dbReference type="ChEBI" id="CHEBI:57279"/>
    </ligand>
</feature>
<feature type="binding site" evidence="1">
    <location>
        <begin position="8"/>
        <end position="9"/>
    </location>
    <ligand>
        <name>1-deoxy-D-xylulose 5-phosphate</name>
        <dbReference type="ChEBI" id="CHEBI:57792"/>
    </ligand>
</feature>
<feature type="binding site" evidence="1">
    <location>
        <position position="17"/>
    </location>
    <ligand>
        <name>3-amino-2-oxopropyl phosphate</name>
        <dbReference type="ChEBI" id="CHEBI:57279"/>
    </ligand>
</feature>
<feature type="binding site" evidence="1">
    <location>
        <position position="44"/>
    </location>
    <ligand>
        <name>1-deoxy-D-xylulose 5-phosphate</name>
        <dbReference type="ChEBI" id="CHEBI:57792"/>
    </ligand>
</feature>
<feature type="binding site" evidence="1">
    <location>
        <position position="49"/>
    </location>
    <ligand>
        <name>1-deoxy-D-xylulose 5-phosphate</name>
        <dbReference type="ChEBI" id="CHEBI:57792"/>
    </ligand>
</feature>
<feature type="binding site" evidence="1">
    <location>
        <position position="99"/>
    </location>
    <ligand>
        <name>1-deoxy-D-xylulose 5-phosphate</name>
        <dbReference type="ChEBI" id="CHEBI:57792"/>
    </ligand>
</feature>
<feature type="binding site" evidence="1">
    <location>
        <position position="191"/>
    </location>
    <ligand>
        <name>3-amino-2-oxopropyl phosphate</name>
        <dbReference type="ChEBI" id="CHEBI:57279"/>
    </ligand>
</feature>
<feature type="binding site" evidence="1">
    <location>
        <begin position="212"/>
        <end position="213"/>
    </location>
    <ligand>
        <name>3-amino-2-oxopropyl phosphate</name>
        <dbReference type="ChEBI" id="CHEBI:57279"/>
    </ligand>
</feature>
<feature type="site" description="Transition state stabilizer" evidence="1">
    <location>
        <position position="150"/>
    </location>
</feature>
<proteinExistence type="inferred from homology"/>
<protein>
    <recommendedName>
        <fullName evidence="1">Pyridoxine 5'-phosphate synthase</fullName>
        <shortName evidence="1">PNP synthase</shortName>
        <ecNumber evidence="1">2.6.99.2</ecNumber>
    </recommendedName>
</protein>
<organism>
    <name type="scientific">Neisseria meningitidis serogroup C / serotype 2a (strain ATCC 700532 / DSM 15464 / FAM18)</name>
    <dbReference type="NCBI Taxonomy" id="272831"/>
    <lineage>
        <taxon>Bacteria</taxon>
        <taxon>Pseudomonadati</taxon>
        <taxon>Pseudomonadota</taxon>
        <taxon>Betaproteobacteria</taxon>
        <taxon>Neisseriales</taxon>
        <taxon>Neisseriaceae</taxon>
        <taxon>Neisseria</taxon>
    </lineage>
</organism>
<evidence type="ECO:0000255" key="1">
    <source>
        <dbReference type="HAMAP-Rule" id="MF_00279"/>
    </source>
</evidence>
<reference key="1">
    <citation type="journal article" date="2007" name="PLoS Genet.">
        <title>Meningococcal genetic variation mechanisms viewed through comparative analysis of serogroup C strain FAM18.</title>
        <authorList>
            <person name="Bentley S.D."/>
            <person name="Vernikos G.S."/>
            <person name="Snyder L.A.S."/>
            <person name="Churcher C."/>
            <person name="Arrowsmith C."/>
            <person name="Chillingworth T."/>
            <person name="Cronin A."/>
            <person name="Davis P.H."/>
            <person name="Holroyd N.E."/>
            <person name="Jagels K."/>
            <person name="Maddison M."/>
            <person name="Moule S."/>
            <person name="Rabbinowitsch E."/>
            <person name="Sharp S."/>
            <person name="Unwin L."/>
            <person name="Whitehead S."/>
            <person name="Quail M.A."/>
            <person name="Achtman M."/>
            <person name="Barrell B.G."/>
            <person name="Saunders N.J."/>
            <person name="Parkhill J."/>
        </authorList>
    </citation>
    <scope>NUCLEOTIDE SEQUENCE [LARGE SCALE GENOMIC DNA]</scope>
    <source>
        <strain>ATCC 700532 / DSM 15464 / FAM18</strain>
    </source>
</reference>
<accession>A1KVH8</accession>
<dbReference type="EC" id="2.6.99.2" evidence="1"/>
<dbReference type="EMBL" id="AM421808">
    <property type="protein sequence ID" value="CAM10882.1"/>
    <property type="molecule type" value="Genomic_DNA"/>
</dbReference>
<dbReference type="RefSeq" id="WP_002216565.1">
    <property type="nucleotide sequence ID" value="NC_008767.1"/>
</dbReference>
<dbReference type="SMR" id="A1KVH8"/>
<dbReference type="KEGG" id="nmc:NMC1703"/>
<dbReference type="HOGENOM" id="CLU_074563_0_0_4"/>
<dbReference type="UniPathway" id="UPA00244">
    <property type="reaction ID" value="UER00313"/>
</dbReference>
<dbReference type="Proteomes" id="UP000002286">
    <property type="component" value="Chromosome"/>
</dbReference>
<dbReference type="GO" id="GO:0005829">
    <property type="term" value="C:cytosol"/>
    <property type="evidence" value="ECO:0007669"/>
    <property type="project" value="TreeGrafter"/>
</dbReference>
<dbReference type="GO" id="GO:0033856">
    <property type="term" value="F:pyridoxine 5'-phosphate synthase activity"/>
    <property type="evidence" value="ECO:0007669"/>
    <property type="project" value="UniProtKB-EC"/>
</dbReference>
<dbReference type="GO" id="GO:0008615">
    <property type="term" value="P:pyridoxine biosynthetic process"/>
    <property type="evidence" value="ECO:0007669"/>
    <property type="project" value="UniProtKB-UniRule"/>
</dbReference>
<dbReference type="CDD" id="cd00003">
    <property type="entry name" value="PNPsynthase"/>
    <property type="match status" value="1"/>
</dbReference>
<dbReference type="FunFam" id="3.20.20.70:FF:000247">
    <property type="entry name" value="Pyridoxine 5'-phosphate synthase"/>
    <property type="match status" value="1"/>
</dbReference>
<dbReference type="Gene3D" id="3.20.20.70">
    <property type="entry name" value="Aldolase class I"/>
    <property type="match status" value="1"/>
</dbReference>
<dbReference type="HAMAP" id="MF_00279">
    <property type="entry name" value="PdxJ"/>
    <property type="match status" value="1"/>
</dbReference>
<dbReference type="InterPro" id="IPR013785">
    <property type="entry name" value="Aldolase_TIM"/>
</dbReference>
<dbReference type="InterPro" id="IPR004569">
    <property type="entry name" value="PyrdxlP_synth_PdxJ"/>
</dbReference>
<dbReference type="InterPro" id="IPR036130">
    <property type="entry name" value="Pyridoxine-5'_phos_synth"/>
</dbReference>
<dbReference type="NCBIfam" id="TIGR00559">
    <property type="entry name" value="pdxJ"/>
    <property type="match status" value="1"/>
</dbReference>
<dbReference type="NCBIfam" id="NF003623">
    <property type="entry name" value="PRK05265.1-1"/>
    <property type="match status" value="1"/>
</dbReference>
<dbReference type="NCBIfam" id="NF003625">
    <property type="entry name" value="PRK05265.1-3"/>
    <property type="match status" value="1"/>
</dbReference>
<dbReference type="NCBIfam" id="NF003627">
    <property type="entry name" value="PRK05265.1-5"/>
    <property type="match status" value="1"/>
</dbReference>
<dbReference type="PANTHER" id="PTHR30456">
    <property type="entry name" value="PYRIDOXINE 5'-PHOSPHATE SYNTHASE"/>
    <property type="match status" value="1"/>
</dbReference>
<dbReference type="PANTHER" id="PTHR30456:SF0">
    <property type="entry name" value="PYRIDOXINE 5'-PHOSPHATE SYNTHASE"/>
    <property type="match status" value="1"/>
</dbReference>
<dbReference type="Pfam" id="PF03740">
    <property type="entry name" value="PdxJ"/>
    <property type="match status" value="1"/>
</dbReference>
<dbReference type="SUPFAM" id="SSF63892">
    <property type="entry name" value="Pyridoxine 5'-phosphate synthase"/>
    <property type="match status" value="1"/>
</dbReference>
<sequence length="242" mass="26545">MLLGVNIDHIATVRNARGTTYPSPVEAALVAETHGADLITMHLREDRRHIKDADVFAVKNAIRTRLNLEMALTEEMLENALKVMPEDVCIVPEKRQEITTEGGLDVLAQQEKIAGFTKILTDAGIRVSLFIDADDRQIQAAYDVGAPVVELHTGAYADARSHAEQLKQFERLQNGAHFAGDLGLVVNAGHGLTIHNVTPIAQILAIRELNIGHSLIAQALFLGLPEAVRQMKEAMFRARLLP</sequence>
<keyword id="KW-0963">Cytoplasm</keyword>
<keyword id="KW-0664">Pyridoxine biosynthesis</keyword>
<keyword id="KW-0808">Transferase</keyword>
<comment type="function">
    <text evidence="1">Catalyzes the complicated ring closure reaction between the two acyclic compounds 1-deoxy-D-xylulose-5-phosphate (DXP) and 3-amino-2-oxopropyl phosphate (1-amino-acetone-3-phosphate or AAP) to form pyridoxine 5'-phosphate (PNP) and inorganic phosphate.</text>
</comment>
<comment type="catalytic activity">
    <reaction evidence="1">
        <text>3-amino-2-oxopropyl phosphate + 1-deoxy-D-xylulose 5-phosphate = pyridoxine 5'-phosphate + phosphate + 2 H2O + H(+)</text>
        <dbReference type="Rhea" id="RHEA:15265"/>
        <dbReference type="ChEBI" id="CHEBI:15377"/>
        <dbReference type="ChEBI" id="CHEBI:15378"/>
        <dbReference type="ChEBI" id="CHEBI:43474"/>
        <dbReference type="ChEBI" id="CHEBI:57279"/>
        <dbReference type="ChEBI" id="CHEBI:57792"/>
        <dbReference type="ChEBI" id="CHEBI:58589"/>
        <dbReference type="EC" id="2.6.99.2"/>
    </reaction>
</comment>
<comment type="pathway">
    <text evidence="1">Cofactor biosynthesis; pyridoxine 5'-phosphate biosynthesis; pyridoxine 5'-phosphate from D-erythrose 4-phosphate: step 5/5.</text>
</comment>
<comment type="subunit">
    <text evidence="1">Homooctamer; tetramer of dimers.</text>
</comment>
<comment type="subcellular location">
    <subcellularLocation>
        <location evidence="1">Cytoplasm</location>
    </subcellularLocation>
</comment>
<comment type="similarity">
    <text evidence="1">Belongs to the PNP synthase family.</text>
</comment>
<name>PDXJ_NEIMF</name>